<protein>
    <recommendedName>
        <fullName evidence="1">Small ribosomal subunit protein uS10</fullName>
    </recommendedName>
    <alternativeName>
        <fullName evidence="2">30S ribosomal protein S10</fullName>
    </alternativeName>
</protein>
<gene>
    <name evidence="1" type="primary">rpsJ</name>
    <name type="ordered locus">CJA_0698</name>
</gene>
<dbReference type="EMBL" id="CP000934">
    <property type="protein sequence ID" value="ACE83455.1"/>
    <property type="molecule type" value="Genomic_DNA"/>
</dbReference>
<dbReference type="RefSeq" id="WP_007644456.1">
    <property type="nucleotide sequence ID" value="NC_010995.1"/>
</dbReference>
<dbReference type="SMR" id="B3PK36"/>
<dbReference type="STRING" id="498211.CJA_0698"/>
<dbReference type="KEGG" id="cja:CJA_0698"/>
<dbReference type="eggNOG" id="COG0051">
    <property type="taxonomic scope" value="Bacteria"/>
</dbReference>
<dbReference type="HOGENOM" id="CLU_122625_1_3_6"/>
<dbReference type="OrthoDB" id="9804464at2"/>
<dbReference type="Proteomes" id="UP000001036">
    <property type="component" value="Chromosome"/>
</dbReference>
<dbReference type="GO" id="GO:1990904">
    <property type="term" value="C:ribonucleoprotein complex"/>
    <property type="evidence" value="ECO:0007669"/>
    <property type="project" value="UniProtKB-KW"/>
</dbReference>
<dbReference type="GO" id="GO:0005840">
    <property type="term" value="C:ribosome"/>
    <property type="evidence" value="ECO:0007669"/>
    <property type="project" value="UniProtKB-KW"/>
</dbReference>
<dbReference type="GO" id="GO:0003735">
    <property type="term" value="F:structural constituent of ribosome"/>
    <property type="evidence" value="ECO:0007669"/>
    <property type="project" value="InterPro"/>
</dbReference>
<dbReference type="GO" id="GO:0000049">
    <property type="term" value="F:tRNA binding"/>
    <property type="evidence" value="ECO:0007669"/>
    <property type="project" value="UniProtKB-UniRule"/>
</dbReference>
<dbReference type="GO" id="GO:0006412">
    <property type="term" value="P:translation"/>
    <property type="evidence" value="ECO:0007669"/>
    <property type="project" value="UniProtKB-UniRule"/>
</dbReference>
<dbReference type="FunFam" id="3.30.70.600:FF:000001">
    <property type="entry name" value="30S ribosomal protein S10"/>
    <property type="match status" value="1"/>
</dbReference>
<dbReference type="Gene3D" id="3.30.70.600">
    <property type="entry name" value="Ribosomal protein S10 domain"/>
    <property type="match status" value="1"/>
</dbReference>
<dbReference type="HAMAP" id="MF_00508">
    <property type="entry name" value="Ribosomal_uS10"/>
    <property type="match status" value="1"/>
</dbReference>
<dbReference type="InterPro" id="IPR001848">
    <property type="entry name" value="Ribosomal_uS10"/>
</dbReference>
<dbReference type="InterPro" id="IPR018268">
    <property type="entry name" value="Ribosomal_uS10_CS"/>
</dbReference>
<dbReference type="InterPro" id="IPR027486">
    <property type="entry name" value="Ribosomal_uS10_dom"/>
</dbReference>
<dbReference type="InterPro" id="IPR036838">
    <property type="entry name" value="Ribosomal_uS10_dom_sf"/>
</dbReference>
<dbReference type="NCBIfam" id="NF001861">
    <property type="entry name" value="PRK00596.1"/>
    <property type="match status" value="1"/>
</dbReference>
<dbReference type="NCBIfam" id="TIGR01049">
    <property type="entry name" value="rpsJ_bact"/>
    <property type="match status" value="1"/>
</dbReference>
<dbReference type="PANTHER" id="PTHR11700">
    <property type="entry name" value="30S RIBOSOMAL PROTEIN S10 FAMILY MEMBER"/>
    <property type="match status" value="1"/>
</dbReference>
<dbReference type="Pfam" id="PF00338">
    <property type="entry name" value="Ribosomal_S10"/>
    <property type="match status" value="1"/>
</dbReference>
<dbReference type="PRINTS" id="PR00971">
    <property type="entry name" value="RIBOSOMALS10"/>
</dbReference>
<dbReference type="SMART" id="SM01403">
    <property type="entry name" value="Ribosomal_S10"/>
    <property type="match status" value="1"/>
</dbReference>
<dbReference type="SUPFAM" id="SSF54999">
    <property type="entry name" value="Ribosomal protein S10"/>
    <property type="match status" value="1"/>
</dbReference>
<dbReference type="PROSITE" id="PS00361">
    <property type="entry name" value="RIBOSOMAL_S10"/>
    <property type="match status" value="1"/>
</dbReference>
<organism>
    <name type="scientific">Cellvibrio japonicus (strain Ueda107)</name>
    <name type="common">Pseudomonas fluorescens subsp. cellulosa</name>
    <dbReference type="NCBI Taxonomy" id="498211"/>
    <lineage>
        <taxon>Bacteria</taxon>
        <taxon>Pseudomonadati</taxon>
        <taxon>Pseudomonadota</taxon>
        <taxon>Gammaproteobacteria</taxon>
        <taxon>Cellvibrionales</taxon>
        <taxon>Cellvibrionaceae</taxon>
        <taxon>Cellvibrio</taxon>
    </lineage>
</organism>
<keyword id="KW-1185">Reference proteome</keyword>
<keyword id="KW-0687">Ribonucleoprotein</keyword>
<keyword id="KW-0689">Ribosomal protein</keyword>
<proteinExistence type="inferred from homology"/>
<accession>B3PK36</accession>
<evidence type="ECO:0000255" key="1">
    <source>
        <dbReference type="HAMAP-Rule" id="MF_00508"/>
    </source>
</evidence>
<evidence type="ECO:0000305" key="2"/>
<comment type="function">
    <text evidence="1">Involved in the binding of tRNA to the ribosomes.</text>
</comment>
<comment type="subunit">
    <text evidence="1">Part of the 30S ribosomal subunit.</text>
</comment>
<comment type="similarity">
    <text evidence="1">Belongs to the universal ribosomal protein uS10 family.</text>
</comment>
<sequence length="103" mass="11739">MQNQRIRIRLKAFDHKLIDASTQEIVETAKRTGAQVRGPIPLPTRKERFTVLISPHVNKDARDQYEIRTHKRLLDIVEPTEKTVDALMKLDLAAGVEVQISLG</sequence>
<reference key="1">
    <citation type="journal article" date="2008" name="J. Bacteriol.">
        <title>Insights into plant cell wall degradation from the genome sequence of the soil bacterium Cellvibrio japonicus.</title>
        <authorList>
            <person name="DeBoy R.T."/>
            <person name="Mongodin E.F."/>
            <person name="Fouts D.E."/>
            <person name="Tailford L.E."/>
            <person name="Khouri H."/>
            <person name="Emerson J.B."/>
            <person name="Mohamoud Y."/>
            <person name="Watkins K."/>
            <person name="Henrissat B."/>
            <person name="Gilbert H.J."/>
            <person name="Nelson K.E."/>
        </authorList>
    </citation>
    <scope>NUCLEOTIDE SEQUENCE [LARGE SCALE GENOMIC DNA]</scope>
    <source>
        <strain>Ueda107</strain>
    </source>
</reference>
<name>RS10_CELJU</name>
<feature type="chain" id="PRO_1000127095" description="Small ribosomal subunit protein uS10">
    <location>
        <begin position="1"/>
        <end position="103"/>
    </location>
</feature>